<proteinExistence type="inferred from homology"/>
<sequence>MDALKQTKFDDKNLIPAIVQDFKTGDILMFAWMNQESLALTIEKQQAVYYSRSRKKLWFKGEQSGHTQLIKEIFTDCDNDVILLRVDQVGGIACHTGRKSCFFQQLDKNNWKTVANVLKNPKDIYE</sequence>
<accession>A1AVW3</accession>
<dbReference type="EC" id="3.5.4.19" evidence="1"/>
<dbReference type="EMBL" id="CP000488">
    <property type="protein sequence ID" value="ABL02070.1"/>
    <property type="molecule type" value="Genomic_DNA"/>
</dbReference>
<dbReference type="RefSeq" id="WP_011737695.1">
    <property type="nucleotide sequence ID" value="NC_008610.1"/>
</dbReference>
<dbReference type="SMR" id="A1AVW3"/>
<dbReference type="STRING" id="413404.Rmag_0289"/>
<dbReference type="KEGG" id="rma:Rmag_0289"/>
<dbReference type="eggNOG" id="COG0139">
    <property type="taxonomic scope" value="Bacteria"/>
</dbReference>
<dbReference type="HOGENOM" id="CLU_048577_5_0_6"/>
<dbReference type="OrthoDB" id="9795769at2"/>
<dbReference type="UniPathway" id="UPA00031">
    <property type="reaction ID" value="UER00008"/>
</dbReference>
<dbReference type="Proteomes" id="UP000002587">
    <property type="component" value="Chromosome"/>
</dbReference>
<dbReference type="GO" id="GO:0005737">
    <property type="term" value="C:cytoplasm"/>
    <property type="evidence" value="ECO:0007669"/>
    <property type="project" value="UniProtKB-SubCell"/>
</dbReference>
<dbReference type="GO" id="GO:0000287">
    <property type="term" value="F:magnesium ion binding"/>
    <property type="evidence" value="ECO:0007669"/>
    <property type="project" value="UniProtKB-UniRule"/>
</dbReference>
<dbReference type="GO" id="GO:0004635">
    <property type="term" value="F:phosphoribosyl-AMP cyclohydrolase activity"/>
    <property type="evidence" value="ECO:0007669"/>
    <property type="project" value="UniProtKB-UniRule"/>
</dbReference>
<dbReference type="GO" id="GO:0008270">
    <property type="term" value="F:zinc ion binding"/>
    <property type="evidence" value="ECO:0007669"/>
    <property type="project" value="UniProtKB-UniRule"/>
</dbReference>
<dbReference type="GO" id="GO:0000105">
    <property type="term" value="P:L-histidine biosynthetic process"/>
    <property type="evidence" value="ECO:0007669"/>
    <property type="project" value="UniProtKB-UniRule"/>
</dbReference>
<dbReference type="FunFam" id="3.10.20.810:FF:000001">
    <property type="entry name" value="Histidine biosynthesis bifunctional protein HisIE"/>
    <property type="match status" value="1"/>
</dbReference>
<dbReference type="Gene3D" id="3.10.20.810">
    <property type="entry name" value="Phosphoribosyl-AMP cyclohydrolase"/>
    <property type="match status" value="1"/>
</dbReference>
<dbReference type="HAMAP" id="MF_01021">
    <property type="entry name" value="HisI"/>
    <property type="match status" value="1"/>
</dbReference>
<dbReference type="InterPro" id="IPR026660">
    <property type="entry name" value="PRA-CH"/>
</dbReference>
<dbReference type="InterPro" id="IPR002496">
    <property type="entry name" value="PRib_AMP_CycHydrolase_dom"/>
</dbReference>
<dbReference type="InterPro" id="IPR038019">
    <property type="entry name" value="PRib_AMP_CycHydrolase_sf"/>
</dbReference>
<dbReference type="NCBIfam" id="NF000768">
    <property type="entry name" value="PRK00051.1"/>
    <property type="match status" value="1"/>
</dbReference>
<dbReference type="PANTHER" id="PTHR42945">
    <property type="entry name" value="HISTIDINE BIOSYNTHESIS BIFUNCTIONAL PROTEIN"/>
    <property type="match status" value="1"/>
</dbReference>
<dbReference type="PANTHER" id="PTHR42945:SF1">
    <property type="entry name" value="HISTIDINE BIOSYNTHESIS BIFUNCTIONAL PROTEIN HIS7"/>
    <property type="match status" value="1"/>
</dbReference>
<dbReference type="Pfam" id="PF01502">
    <property type="entry name" value="PRA-CH"/>
    <property type="match status" value="1"/>
</dbReference>
<dbReference type="SUPFAM" id="SSF141734">
    <property type="entry name" value="HisI-like"/>
    <property type="match status" value="1"/>
</dbReference>
<name>HIS3_RUTMC</name>
<feature type="chain" id="PRO_0000319715" description="Phosphoribosyl-AMP cyclohydrolase">
    <location>
        <begin position="1"/>
        <end position="126"/>
    </location>
</feature>
<feature type="binding site" evidence="1">
    <location>
        <position position="76"/>
    </location>
    <ligand>
        <name>Mg(2+)</name>
        <dbReference type="ChEBI" id="CHEBI:18420"/>
    </ligand>
</feature>
<feature type="binding site" evidence="1">
    <location>
        <position position="77"/>
    </location>
    <ligand>
        <name>Zn(2+)</name>
        <dbReference type="ChEBI" id="CHEBI:29105"/>
        <note>ligand shared between dimeric partners</note>
    </ligand>
</feature>
<feature type="binding site" evidence="1">
    <location>
        <position position="78"/>
    </location>
    <ligand>
        <name>Mg(2+)</name>
        <dbReference type="ChEBI" id="CHEBI:18420"/>
    </ligand>
</feature>
<feature type="binding site" evidence="1">
    <location>
        <position position="80"/>
    </location>
    <ligand>
        <name>Mg(2+)</name>
        <dbReference type="ChEBI" id="CHEBI:18420"/>
    </ligand>
</feature>
<feature type="binding site" evidence="1">
    <location>
        <position position="94"/>
    </location>
    <ligand>
        <name>Zn(2+)</name>
        <dbReference type="ChEBI" id="CHEBI:29105"/>
        <note>ligand shared between dimeric partners</note>
    </ligand>
</feature>
<feature type="binding site" evidence="1">
    <location>
        <position position="101"/>
    </location>
    <ligand>
        <name>Zn(2+)</name>
        <dbReference type="ChEBI" id="CHEBI:29105"/>
        <note>ligand shared between dimeric partners</note>
    </ligand>
</feature>
<gene>
    <name evidence="1" type="primary">hisI</name>
    <name type="ordered locus">Rmag_0289</name>
</gene>
<comment type="function">
    <text evidence="1">Catalyzes the hydrolysis of the adenine ring of phosphoribosyl-AMP.</text>
</comment>
<comment type="catalytic activity">
    <reaction evidence="1">
        <text>1-(5-phospho-beta-D-ribosyl)-5'-AMP + H2O = 1-(5-phospho-beta-D-ribosyl)-5-[(5-phospho-beta-D-ribosylamino)methylideneamino]imidazole-4-carboxamide</text>
        <dbReference type="Rhea" id="RHEA:20049"/>
        <dbReference type="ChEBI" id="CHEBI:15377"/>
        <dbReference type="ChEBI" id="CHEBI:58435"/>
        <dbReference type="ChEBI" id="CHEBI:59457"/>
        <dbReference type="EC" id="3.5.4.19"/>
    </reaction>
</comment>
<comment type="cofactor">
    <cofactor evidence="1">
        <name>Mg(2+)</name>
        <dbReference type="ChEBI" id="CHEBI:18420"/>
    </cofactor>
    <text evidence="1">Binds 1 Mg(2+) ion per subunit.</text>
</comment>
<comment type="cofactor">
    <cofactor evidence="1">
        <name>Zn(2+)</name>
        <dbReference type="ChEBI" id="CHEBI:29105"/>
    </cofactor>
    <text evidence="1">Binds 1 zinc ion per subunit.</text>
</comment>
<comment type="pathway">
    <text evidence="1">Amino-acid biosynthesis; L-histidine biosynthesis; L-histidine from 5-phospho-alpha-D-ribose 1-diphosphate: step 3/9.</text>
</comment>
<comment type="subunit">
    <text evidence="1">Homodimer.</text>
</comment>
<comment type="subcellular location">
    <subcellularLocation>
        <location evidence="1">Cytoplasm</location>
    </subcellularLocation>
</comment>
<comment type="similarity">
    <text evidence="1">Belongs to the PRA-CH family.</text>
</comment>
<organism>
    <name type="scientific">Ruthia magnifica subsp. Calyptogena magnifica</name>
    <dbReference type="NCBI Taxonomy" id="413404"/>
    <lineage>
        <taxon>Bacteria</taxon>
        <taxon>Pseudomonadati</taxon>
        <taxon>Pseudomonadota</taxon>
        <taxon>Gammaproteobacteria</taxon>
        <taxon>Candidatus Pseudothioglobaceae</taxon>
        <taxon>Candidatus Ruthturnera</taxon>
    </lineage>
</organism>
<evidence type="ECO:0000255" key="1">
    <source>
        <dbReference type="HAMAP-Rule" id="MF_01021"/>
    </source>
</evidence>
<keyword id="KW-0028">Amino-acid biosynthesis</keyword>
<keyword id="KW-0963">Cytoplasm</keyword>
<keyword id="KW-0368">Histidine biosynthesis</keyword>
<keyword id="KW-0378">Hydrolase</keyword>
<keyword id="KW-0460">Magnesium</keyword>
<keyword id="KW-0479">Metal-binding</keyword>
<keyword id="KW-0862">Zinc</keyword>
<protein>
    <recommendedName>
        <fullName evidence="1">Phosphoribosyl-AMP cyclohydrolase</fullName>
        <shortName evidence="1">PRA-CH</shortName>
        <ecNumber evidence="1">3.5.4.19</ecNumber>
    </recommendedName>
</protein>
<reference key="1">
    <citation type="journal article" date="2007" name="Science">
        <title>The Calyptogena magnifica chemoautotrophic symbiont genome.</title>
        <authorList>
            <person name="Newton I.L.G."/>
            <person name="Woyke T."/>
            <person name="Auchtung T.A."/>
            <person name="Dilly G.F."/>
            <person name="Dutton R.J."/>
            <person name="Fisher M.C."/>
            <person name="Fontanez K.M."/>
            <person name="Lau E."/>
            <person name="Stewart F.J."/>
            <person name="Richardson P.M."/>
            <person name="Barry K.W."/>
            <person name="Saunders E."/>
            <person name="Detter J.C."/>
            <person name="Wu D."/>
            <person name="Eisen J.A."/>
            <person name="Cavanaugh C.M."/>
        </authorList>
    </citation>
    <scope>NUCLEOTIDE SEQUENCE [LARGE SCALE GENOMIC DNA]</scope>
</reference>